<organism>
    <name type="scientific">Bacillus thuringiensis (strain Al Hakam)</name>
    <dbReference type="NCBI Taxonomy" id="412694"/>
    <lineage>
        <taxon>Bacteria</taxon>
        <taxon>Bacillati</taxon>
        <taxon>Bacillota</taxon>
        <taxon>Bacilli</taxon>
        <taxon>Bacillales</taxon>
        <taxon>Bacillaceae</taxon>
        <taxon>Bacillus</taxon>
        <taxon>Bacillus cereus group</taxon>
    </lineage>
</organism>
<feature type="chain" id="PRO_0000368334" description="ATP synthase subunit b">
    <location>
        <begin position="1"/>
        <end position="168"/>
    </location>
</feature>
<feature type="transmembrane region" description="Helical" evidence="1">
    <location>
        <begin position="9"/>
        <end position="29"/>
    </location>
</feature>
<gene>
    <name evidence="1" type="primary">atpF</name>
    <name type="ordered locus">BALH_4812</name>
</gene>
<evidence type="ECO:0000255" key="1">
    <source>
        <dbReference type="HAMAP-Rule" id="MF_01398"/>
    </source>
</evidence>
<comment type="function">
    <text evidence="1">F(1)F(0) ATP synthase produces ATP from ADP in the presence of a proton or sodium gradient. F-type ATPases consist of two structural domains, F(1) containing the extramembraneous catalytic core and F(0) containing the membrane proton channel, linked together by a central stalk and a peripheral stalk. During catalysis, ATP synthesis in the catalytic domain of F(1) is coupled via a rotary mechanism of the central stalk subunits to proton translocation.</text>
</comment>
<comment type="function">
    <text evidence="1">Component of the F(0) channel, it forms part of the peripheral stalk, linking F(1) to F(0).</text>
</comment>
<comment type="subunit">
    <text evidence="1">F-type ATPases have 2 components, F(1) - the catalytic core - and F(0) - the membrane proton channel. F(1) has five subunits: alpha(3), beta(3), gamma(1), delta(1), epsilon(1). F(0) has three main subunits: a(1), b(2) and c(10-14). The alpha and beta chains form an alternating ring which encloses part of the gamma chain. F(1) is attached to F(0) by a central stalk formed by the gamma and epsilon chains, while a peripheral stalk is formed by the delta and b chains.</text>
</comment>
<comment type="subcellular location">
    <subcellularLocation>
        <location evidence="1">Cell membrane</location>
        <topology evidence="1">Single-pass membrane protein</topology>
    </subcellularLocation>
</comment>
<comment type="similarity">
    <text evidence="1">Belongs to the ATPase B chain family.</text>
</comment>
<sequence length="168" mass="18957">MPTLLLGAAIPFGTIAYTLFIFLLLLVMLRKFAWGPLMGIMKEREEHVANEIDAAERNNAEAKKLVEEQREMLKQSRVEAQELIERAKKQAVDQKDVIVAAAKEEAESIKASAVQEIQREKEQAIAALQEQVASLSVQIASKVIEKELKEEDQVKLIRDYIKEVGEAR</sequence>
<proteinExistence type="inferred from homology"/>
<accession>A0RL99</accession>
<keyword id="KW-0066">ATP synthesis</keyword>
<keyword id="KW-1003">Cell membrane</keyword>
<keyword id="KW-0138">CF(0)</keyword>
<keyword id="KW-0375">Hydrogen ion transport</keyword>
<keyword id="KW-0406">Ion transport</keyword>
<keyword id="KW-0472">Membrane</keyword>
<keyword id="KW-0812">Transmembrane</keyword>
<keyword id="KW-1133">Transmembrane helix</keyword>
<keyword id="KW-0813">Transport</keyword>
<name>ATPF_BACAH</name>
<dbReference type="EMBL" id="CP000485">
    <property type="protein sequence ID" value="ABK87992.1"/>
    <property type="molecule type" value="Genomic_DNA"/>
</dbReference>
<dbReference type="RefSeq" id="WP_001142616.1">
    <property type="nucleotide sequence ID" value="NC_008600.1"/>
</dbReference>
<dbReference type="SMR" id="A0RL99"/>
<dbReference type="GeneID" id="45025139"/>
<dbReference type="KEGG" id="btl:BALH_4812"/>
<dbReference type="HOGENOM" id="CLU_079215_4_2_9"/>
<dbReference type="GO" id="GO:0005886">
    <property type="term" value="C:plasma membrane"/>
    <property type="evidence" value="ECO:0007669"/>
    <property type="project" value="UniProtKB-SubCell"/>
</dbReference>
<dbReference type="GO" id="GO:0045259">
    <property type="term" value="C:proton-transporting ATP synthase complex"/>
    <property type="evidence" value="ECO:0007669"/>
    <property type="project" value="UniProtKB-KW"/>
</dbReference>
<dbReference type="GO" id="GO:0046933">
    <property type="term" value="F:proton-transporting ATP synthase activity, rotational mechanism"/>
    <property type="evidence" value="ECO:0007669"/>
    <property type="project" value="UniProtKB-UniRule"/>
</dbReference>
<dbReference type="GO" id="GO:0046961">
    <property type="term" value="F:proton-transporting ATPase activity, rotational mechanism"/>
    <property type="evidence" value="ECO:0007669"/>
    <property type="project" value="TreeGrafter"/>
</dbReference>
<dbReference type="CDD" id="cd06503">
    <property type="entry name" value="ATP-synt_Fo_b"/>
    <property type="match status" value="1"/>
</dbReference>
<dbReference type="Gene3D" id="6.10.250.1580">
    <property type="match status" value="1"/>
</dbReference>
<dbReference type="HAMAP" id="MF_01398">
    <property type="entry name" value="ATP_synth_b_bprime"/>
    <property type="match status" value="1"/>
</dbReference>
<dbReference type="InterPro" id="IPR028987">
    <property type="entry name" value="ATP_synth_B-like_membr_sf"/>
</dbReference>
<dbReference type="InterPro" id="IPR002146">
    <property type="entry name" value="ATP_synth_b/b'su_bac/chlpt"/>
</dbReference>
<dbReference type="InterPro" id="IPR005864">
    <property type="entry name" value="ATP_synth_F0_bsu_bac"/>
</dbReference>
<dbReference type="InterPro" id="IPR050059">
    <property type="entry name" value="ATP_synthase_B_chain"/>
</dbReference>
<dbReference type="NCBIfam" id="TIGR01144">
    <property type="entry name" value="ATP_synt_b"/>
    <property type="match status" value="1"/>
</dbReference>
<dbReference type="PANTHER" id="PTHR33445:SF1">
    <property type="entry name" value="ATP SYNTHASE SUBUNIT B"/>
    <property type="match status" value="1"/>
</dbReference>
<dbReference type="PANTHER" id="PTHR33445">
    <property type="entry name" value="ATP SYNTHASE SUBUNIT B', CHLOROPLASTIC"/>
    <property type="match status" value="1"/>
</dbReference>
<dbReference type="Pfam" id="PF00430">
    <property type="entry name" value="ATP-synt_B"/>
    <property type="match status" value="1"/>
</dbReference>
<dbReference type="SUPFAM" id="SSF81573">
    <property type="entry name" value="F1F0 ATP synthase subunit B, membrane domain"/>
    <property type="match status" value="1"/>
</dbReference>
<reference key="1">
    <citation type="journal article" date="2007" name="J. Bacteriol.">
        <title>The complete genome sequence of Bacillus thuringiensis Al Hakam.</title>
        <authorList>
            <person name="Challacombe J.F."/>
            <person name="Altherr M.R."/>
            <person name="Xie G."/>
            <person name="Bhotika S.S."/>
            <person name="Brown N."/>
            <person name="Bruce D."/>
            <person name="Campbell C.S."/>
            <person name="Campbell M.L."/>
            <person name="Chen J."/>
            <person name="Chertkov O."/>
            <person name="Cleland C."/>
            <person name="Dimitrijevic M."/>
            <person name="Doggett N.A."/>
            <person name="Fawcett J.J."/>
            <person name="Glavina T."/>
            <person name="Goodwin L.A."/>
            <person name="Green L.D."/>
            <person name="Han C.S."/>
            <person name="Hill K.K."/>
            <person name="Hitchcock P."/>
            <person name="Jackson P.J."/>
            <person name="Keim P."/>
            <person name="Kewalramani A.R."/>
            <person name="Longmire J."/>
            <person name="Lucas S."/>
            <person name="Malfatti S."/>
            <person name="Martinez D."/>
            <person name="McMurry K."/>
            <person name="Meincke L.J."/>
            <person name="Misra M."/>
            <person name="Moseman B.L."/>
            <person name="Mundt M."/>
            <person name="Munk A.C."/>
            <person name="Okinaka R.T."/>
            <person name="Parson-Quintana B."/>
            <person name="Reilly L.P."/>
            <person name="Richardson P."/>
            <person name="Robinson D.L."/>
            <person name="Saunders E."/>
            <person name="Tapia R."/>
            <person name="Tesmer J.G."/>
            <person name="Thayer N."/>
            <person name="Thompson L.S."/>
            <person name="Tice H."/>
            <person name="Ticknor L.O."/>
            <person name="Wills P.L."/>
            <person name="Gilna P."/>
            <person name="Brettin T.S."/>
        </authorList>
    </citation>
    <scope>NUCLEOTIDE SEQUENCE [LARGE SCALE GENOMIC DNA]</scope>
    <source>
        <strain>Al Hakam</strain>
    </source>
</reference>
<protein>
    <recommendedName>
        <fullName evidence="1">ATP synthase subunit b</fullName>
    </recommendedName>
    <alternativeName>
        <fullName evidence="1">ATP synthase F(0) sector subunit b</fullName>
    </alternativeName>
    <alternativeName>
        <fullName evidence="1">ATPase subunit I</fullName>
    </alternativeName>
    <alternativeName>
        <fullName evidence="1">F-type ATPase subunit b</fullName>
        <shortName evidence="1">F-ATPase subunit b</shortName>
    </alternativeName>
</protein>